<accession>Q6PD28</accession>
<accession>Q3V3S8</accession>
<accession>Q8R342</accession>
<evidence type="ECO:0000250" key="1">
    <source>
        <dbReference type="UniProtKB" id="Q15173"/>
    </source>
</evidence>
<evidence type="ECO:0000256" key="2">
    <source>
        <dbReference type="SAM" id="MobiDB-lite"/>
    </source>
</evidence>
<evidence type="ECO:0000305" key="3"/>
<proteinExistence type="evidence at protein level"/>
<sequence>METKLPPASTPTSPSSPGLSPVPPPDKVDGFSRRSLRRARPRRSHSSSQFRYQSNQQELTPLPLLKDVPASELHELLSRKLAQCGVMFDFLDCVADLKGKEVKRAALNELVECVGCTRGVLIEPVYPDIIRMISVNIFRTLPPSENPEFDPEEDEPNLEPSWPHLQLVYEFFLRFLESPDFQPSVAKRYVDQKFVLMLLELFDSEDPREREYLKTILHRVYGKFLGLRAYIRKQCNHIFLRFIYELEHFNGVAELLEILGSIINGFALPLKTEHKQFLVRVLIPLHSVKSLSVFHAQLAYCVVQFLEKDATLTEHVIRGLLKYWPKTCTQKEVMFLGEMEEILDVIEPSQFVKIQEPLFKQVARCVSSPHFQVAERALYFWNNEYILSLIEDNCHTVLPAVFGTLYQVSKEHWNQTIVSLIYNVLKTFMEMNGKLFDELTASYKLEKQQEQQKAQERQELWRGLEELRLRRLQGTQGAKEAPVPRPTPQVAASGGQS</sequence>
<keyword id="KW-0963">Cytoplasm</keyword>
<keyword id="KW-0597">Phosphoprotein</keyword>
<keyword id="KW-1185">Reference proteome</keyword>
<keyword id="KW-0832">Ubl conjugation</keyword>
<organism>
    <name type="scientific">Mus musculus</name>
    <name type="common">Mouse</name>
    <dbReference type="NCBI Taxonomy" id="10090"/>
    <lineage>
        <taxon>Eukaryota</taxon>
        <taxon>Metazoa</taxon>
        <taxon>Chordata</taxon>
        <taxon>Craniata</taxon>
        <taxon>Vertebrata</taxon>
        <taxon>Euteleostomi</taxon>
        <taxon>Mammalia</taxon>
        <taxon>Eutheria</taxon>
        <taxon>Euarchontoglires</taxon>
        <taxon>Glires</taxon>
        <taxon>Rodentia</taxon>
        <taxon>Myomorpha</taxon>
        <taxon>Muroidea</taxon>
        <taxon>Muridae</taxon>
        <taxon>Murinae</taxon>
        <taxon>Mus</taxon>
        <taxon>Mus</taxon>
    </lineage>
</organism>
<dbReference type="EMBL" id="AK034167">
    <property type="protein sequence ID" value="BAE20490.1"/>
    <property type="molecule type" value="mRNA"/>
</dbReference>
<dbReference type="EMBL" id="AK171041">
    <property type="protein sequence ID" value="BAE42206.1"/>
    <property type="molecule type" value="mRNA"/>
</dbReference>
<dbReference type="EMBL" id="AK171178">
    <property type="protein sequence ID" value="BAE42296.1"/>
    <property type="molecule type" value="mRNA"/>
</dbReference>
<dbReference type="EMBL" id="AC127556">
    <property type="status" value="NOT_ANNOTATED_CDS"/>
    <property type="molecule type" value="Genomic_DNA"/>
</dbReference>
<dbReference type="EMBL" id="CH466612">
    <property type="protein sequence ID" value="EDL33229.1"/>
    <property type="molecule type" value="Genomic_DNA"/>
</dbReference>
<dbReference type="EMBL" id="BC058977">
    <property type="protein sequence ID" value="AAH58977.1"/>
    <property type="molecule type" value="mRNA"/>
</dbReference>
<dbReference type="EMBL" id="BC026670">
    <property type="protein sequence ID" value="AAH26670.1"/>
    <property type="molecule type" value="mRNA"/>
</dbReference>
<dbReference type="CCDS" id="CCDS29499.1"/>
<dbReference type="RefSeq" id="NP_937811.1">
    <property type="nucleotide sequence ID" value="NM_198168.3"/>
</dbReference>
<dbReference type="RefSeq" id="XP_036017413.1">
    <property type="nucleotide sequence ID" value="XM_036161520.1"/>
</dbReference>
<dbReference type="SMR" id="Q6PD28"/>
<dbReference type="FunCoup" id="Q6PD28">
    <property type="interactions" value="1411"/>
</dbReference>
<dbReference type="IntAct" id="Q6PD28">
    <property type="interactions" value="1"/>
</dbReference>
<dbReference type="STRING" id="10090.ENSMUSP00000025695"/>
<dbReference type="GlyGen" id="Q6PD28">
    <property type="glycosylation" value="1 site"/>
</dbReference>
<dbReference type="iPTMnet" id="Q6PD28"/>
<dbReference type="PhosphoSitePlus" id="Q6PD28"/>
<dbReference type="PaxDb" id="10090-ENSMUSP00000025695"/>
<dbReference type="ProteomicsDB" id="296443"/>
<dbReference type="Pumba" id="Q6PD28"/>
<dbReference type="Antibodypedia" id="29566">
    <property type="antibodies" value="107 antibodies from 28 providers"/>
</dbReference>
<dbReference type="DNASU" id="225849"/>
<dbReference type="Ensembl" id="ENSMUST00000025695.10">
    <property type="protein sequence ID" value="ENSMUSP00000025695.10"/>
    <property type="gene ID" value="ENSMUSG00000024777.11"/>
</dbReference>
<dbReference type="GeneID" id="225849"/>
<dbReference type="KEGG" id="mmu:225849"/>
<dbReference type="UCSC" id="uc008ght.1">
    <property type="organism name" value="mouse"/>
</dbReference>
<dbReference type="AGR" id="MGI:2388480"/>
<dbReference type="CTD" id="5526"/>
<dbReference type="MGI" id="MGI:2388480">
    <property type="gene designation" value="Ppp2r5b"/>
</dbReference>
<dbReference type="VEuPathDB" id="HostDB:ENSMUSG00000024777"/>
<dbReference type="eggNOG" id="KOG2085">
    <property type="taxonomic scope" value="Eukaryota"/>
</dbReference>
<dbReference type="GeneTree" id="ENSGT01030000234620"/>
<dbReference type="HOGENOM" id="CLU_012437_4_0_1"/>
<dbReference type="InParanoid" id="Q6PD28"/>
<dbReference type="OMA" id="QDRRMQM"/>
<dbReference type="OrthoDB" id="10264446at2759"/>
<dbReference type="PhylomeDB" id="Q6PD28"/>
<dbReference type="TreeFam" id="TF105556"/>
<dbReference type="Reactome" id="R-MMU-141444">
    <property type="pathway name" value="Amplification of signal from unattached kinetochores via a MAD2 inhibitory signal"/>
</dbReference>
<dbReference type="Reactome" id="R-MMU-195253">
    <property type="pathway name" value="Degradation of beta-catenin by the destruction complex"/>
</dbReference>
<dbReference type="Reactome" id="R-MMU-196299">
    <property type="pathway name" value="Beta-catenin phosphorylation cascade"/>
</dbReference>
<dbReference type="Reactome" id="R-MMU-2467813">
    <property type="pathway name" value="Separation of Sister Chromatids"/>
</dbReference>
<dbReference type="Reactome" id="R-MMU-2500257">
    <property type="pathway name" value="Resolution of Sister Chromatid Cohesion"/>
</dbReference>
<dbReference type="Reactome" id="R-MMU-389356">
    <property type="pathway name" value="Co-stimulation by CD28"/>
</dbReference>
<dbReference type="Reactome" id="R-MMU-389513">
    <property type="pathway name" value="Co-inhibition by CTLA4"/>
</dbReference>
<dbReference type="Reactome" id="R-MMU-432142">
    <property type="pathway name" value="Platelet sensitization by LDL"/>
</dbReference>
<dbReference type="Reactome" id="R-MMU-4641262">
    <property type="pathway name" value="Disassembly of the destruction complex and recruitment of AXIN to the membrane"/>
</dbReference>
<dbReference type="Reactome" id="R-MMU-5663220">
    <property type="pathway name" value="RHO GTPases Activate Formins"/>
</dbReference>
<dbReference type="Reactome" id="R-MMU-5673000">
    <property type="pathway name" value="RAF activation"/>
</dbReference>
<dbReference type="Reactome" id="R-MMU-5675221">
    <property type="pathway name" value="Negative regulation of MAPK pathway"/>
</dbReference>
<dbReference type="Reactome" id="R-MMU-6811558">
    <property type="pathway name" value="PI5P, PP2A and IER3 Regulate PI3K/AKT Signaling"/>
</dbReference>
<dbReference type="Reactome" id="R-MMU-68877">
    <property type="pathway name" value="Mitotic Prometaphase"/>
</dbReference>
<dbReference type="Reactome" id="R-MMU-9648025">
    <property type="pathway name" value="EML4 and NUDC in mitotic spindle formation"/>
</dbReference>
<dbReference type="BioGRID-ORCS" id="225849">
    <property type="hits" value="2 hits in 78 CRISPR screens"/>
</dbReference>
<dbReference type="CD-CODE" id="CE726F99">
    <property type="entry name" value="Postsynaptic density"/>
</dbReference>
<dbReference type="ChiTaRS" id="Ppp2r5b">
    <property type="organism name" value="mouse"/>
</dbReference>
<dbReference type="PRO" id="PR:Q6PD28"/>
<dbReference type="Proteomes" id="UP000000589">
    <property type="component" value="Chromosome 19"/>
</dbReference>
<dbReference type="RNAct" id="Q6PD28">
    <property type="molecule type" value="protein"/>
</dbReference>
<dbReference type="Bgee" id="ENSMUSG00000024777">
    <property type="expression patterns" value="Expressed in adrenal gland and 98 other cell types or tissues"/>
</dbReference>
<dbReference type="GO" id="GO:0005737">
    <property type="term" value="C:cytoplasm"/>
    <property type="evidence" value="ECO:0007669"/>
    <property type="project" value="UniProtKB-SubCell"/>
</dbReference>
<dbReference type="GO" id="GO:0000159">
    <property type="term" value="C:protein phosphatase type 2A complex"/>
    <property type="evidence" value="ECO:0007669"/>
    <property type="project" value="InterPro"/>
</dbReference>
<dbReference type="GO" id="GO:0019888">
    <property type="term" value="F:protein phosphatase regulator activity"/>
    <property type="evidence" value="ECO:0007669"/>
    <property type="project" value="InterPro"/>
</dbReference>
<dbReference type="GO" id="GO:0071363">
    <property type="term" value="P:cellular response to growth factor stimulus"/>
    <property type="evidence" value="ECO:0000266"/>
    <property type="project" value="MGI"/>
</dbReference>
<dbReference type="GO" id="GO:0070317">
    <property type="term" value="P:negative regulation of G0 to G1 transition"/>
    <property type="evidence" value="ECO:0000266"/>
    <property type="project" value="MGI"/>
</dbReference>
<dbReference type="GO" id="GO:0010976">
    <property type="term" value="P:positive regulation of neuron projection development"/>
    <property type="evidence" value="ECO:0000266"/>
    <property type="project" value="MGI"/>
</dbReference>
<dbReference type="GO" id="GO:0051388">
    <property type="term" value="P:positive regulation of neurotrophin TRK receptor signaling pathway"/>
    <property type="evidence" value="ECO:0000266"/>
    <property type="project" value="MGI"/>
</dbReference>
<dbReference type="GO" id="GO:0031334">
    <property type="term" value="P:positive regulation of protein-containing complex assembly"/>
    <property type="evidence" value="ECO:0000266"/>
    <property type="project" value="MGI"/>
</dbReference>
<dbReference type="GO" id="GO:0045944">
    <property type="term" value="P:positive regulation of transcription by RNA polymerase II"/>
    <property type="evidence" value="ECO:0000266"/>
    <property type="project" value="MGI"/>
</dbReference>
<dbReference type="GO" id="GO:0051726">
    <property type="term" value="P:regulation of cell cycle"/>
    <property type="evidence" value="ECO:0000266"/>
    <property type="project" value="MGI"/>
</dbReference>
<dbReference type="GO" id="GO:0007165">
    <property type="term" value="P:signal transduction"/>
    <property type="evidence" value="ECO:0007669"/>
    <property type="project" value="InterPro"/>
</dbReference>
<dbReference type="FunFam" id="1.25.10.10:FF:000010">
    <property type="entry name" value="Serine/threonine-protein phosphatase 2A 56 kDa regulatory subunit"/>
    <property type="match status" value="1"/>
</dbReference>
<dbReference type="Gene3D" id="1.25.10.10">
    <property type="entry name" value="Leucine-rich Repeat Variant"/>
    <property type="match status" value="1"/>
</dbReference>
<dbReference type="InterPro" id="IPR011989">
    <property type="entry name" value="ARM-like"/>
</dbReference>
<dbReference type="InterPro" id="IPR016024">
    <property type="entry name" value="ARM-type_fold"/>
</dbReference>
<dbReference type="InterPro" id="IPR002554">
    <property type="entry name" value="PP2A_B56"/>
</dbReference>
<dbReference type="PANTHER" id="PTHR10257">
    <property type="entry name" value="SERINE/THREONINE PROTEIN PHOSPHATASE 2A PP2A REGULATORY SUBUNIT B"/>
    <property type="match status" value="1"/>
</dbReference>
<dbReference type="PANTHER" id="PTHR10257:SF4">
    <property type="entry name" value="SERINE_THREONINE-PROTEIN PHOSPHATASE 2A 56 KDA REGULATORY SUBUNIT BETA ISOFORM"/>
    <property type="match status" value="1"/>
</dbReference>
<dbReference type="Pfam" id="PF01603">
    <property type="entry name" value="B56"/>
    <property type="match status" value="1"/>
</dbReference>
<dbReference type="PIRSF" id="PIRSF028043">
    <property type="entry name" value="PP2A_B56"/>
    <property type="match status" value="1"/>
</dbReference>
<dbReference type="SUPFAM" id="SSF48371">
    <property type="entry name" value="ARM repeat"/>
    <property type="match status" value="1"/>
</dbReference>
<gene>
    <name type="primary">Ppp2r5b</name>
</gene>
<comment type="function">
    <text evidence="1">As the regulatory component of the serine/threonine-protein phosphatase 2A (PP2A) holoenzyme, modulates substrate specificity, subcellular localization, and responsiveness to phosphorylation. The phosphorylated form mediates the interaction between PP2A and AKT1, leading to AKT1 dephosphorylation.</text>
</comment>
<comment type="subunit">
    <text evidence="1">Component of the serine/threonine-protein phosphatase 2A complex (PP2A). This complex consists of a common heterodimeric core enzyme, composed of a 36 kDa catalytic subunit (subunit C) and a 65 kDa constant scaffold subunit (PR65 or subunit A), that associates with a variety of regulatory subunits. Proteins that associate with the core dimer include three families of regulatory subunits B (the R2/B/PR55/B55, R3/B''/PR72/PR130/PR59 and R5/B'/B56 families), the 48 kDa variable regulatory subunit, viral proteins, and cell signaling molecules. Interacts with SGO1. Interacts with AKT1.</text>
</comment>
<comment type="subcellular location">
    <subcellularLocation>
        <location evidence="1">Cytoplasm</location>
    </subcellularLocation>
</comment>
<comment type="PTM">
    <text evidence="1">Ubiquitinated by CUL3-KLHL15 complex; this modification leads to proteasomal degradation.</text>
</comment>
<comment type="similarity">
    <text evidence="3">Belongs to the phosphatase 2A regulatory subunit B56 family.</text>
</comment>
<protein>
    <recommendedName>
        <fullName>Serine/threonine-protein phosphatase 2A 56 kDa regulatory subunit beta isoform</fullName>
    </recommendedName>
    <alternativeName>
        <fullName>PP2A B subunit isoform B'-beta</fullName>
    </alternativeName>
    <alternativeName>
        <fullName>PP2A B subunit isoform B56-beta</fullName>
    </alternativeName>
    <alternativeName>
        <fullName>PP2A B subunit isoform PR61-beta</fullName>
    </alternativeName>
    <alternativeName>
        <fullName>PP2A B subunit isoform R5-beta</fullName>
    </alternativeName>
</protein>
<name>2A5B_MOUSE</name>
<feature type="chain" id="PRO_0000438660" description="Serine/threonine-protein phosphatase 2A 56 kDa regulatory subunit beta isoform">
    <location>
        <begin position="1"/>
        <end position="497"/>
    </location>
</feature>
<feature type="region of interest" description="Disordered" evidence="2">
    <location>
        <begin position="1"/>
        <end position="55"/>
    </location>
</feature>
<feature type="region of interest" description="Disordered" evidence="2">
    <location>
        <begin position="473"/>
        <end position="497"/>
    </location>
</feature>
<feature type="compositionally biased region" description="Low complexity" evidence="2">
    <location>
        <begin position="1"/>
        <end position="19"/>
    </location>
</feature>
<feature type="compositionally biased region" description="Basic residues" evidence="2">
    <location>
        <begin position="34"/>
        <end position="45"/>
    </location>
</feature>
<feature type="modified residue" description="Phosphoserine" evidence="1">
    <location>
        <position position="32"/>
    </location>
</feature>
<feature type="modified residue" description="Phosphoserine" evidence="1">
    <location>
        <position position="35"/>
    </location>
</feature>
<feature type="modified residue" description="Phosphoserine" evidence="1">
    <location>
        <position position="44"/>
    </location>
</feature>
<feature type="modified residue" description="Phosphoserine" evidence="1">
    <location>
        <position position="46"/>
    </location>
</feature>
<feature type="modified residue" description="Phosphoserine" evidence="1">
    <location>
        <position position="47"/>
    </location>
</feature>
<feature type="modified residue" description="Phosphoserine" evidence="1">
    <location>
        <position position="48"/>
    </location>
</feature>
<feature type="sequence conflict" description="In Ref. 1; BAE20490." evidence="3" ref="1">
    <original>Q</original>
    <variation>R</variation>
    <location>
        <position position="458"/>
    </location>
</feature>
<reference key="1">
    <citation type="journal article" date="2005" name="Science">
        <title>The transcriptional landscape of the mammalian genome.</title>
        <authorList>
            <person name="Carninci P."/>
            <person name="Kasukawa T."/>
            <person name="Katayama S."/>
            <person name="Gough J."/>
            <person name="Frith M.C."/>
            <person name="Maeda N."/>
            <person name="Oyama R."/>
            <person name="Ravasi T."/>
            <person name="Lenhard B."/>
            <person name="Wells C."/>
            <person name="Kodzius R."/>
            <person name="Shimokawa K."/>
            <person name="Bajic V.B."/>
            <person name="Brenner S.E."/>
            <person name="Batalov S."/>
            <person name="Forrest A.R."/>
            <person name="Zavolan M."/>
            <person name="Davis M.J."/>
            <person name="Wilming L.G."/>
            <person name="Aidinis V."/>
            <person name="Allen J.E."/>
            <person name="Ambesi-Impiombato A."/>
            <person name="Apweiler R."/>
            <person name="Aturaliya R.N."/>
            <person name="Bailey T.L."/>
            <person name="Bansal M."/>
            <person name="Baxter L."/>
            <person name="Beisel K.W."/>
            <person name="Bersano T."/>
            <person name="Bono H."/>
            <person name="Chalk A.M."/>
            <person name="Chiu K.P."/>
            <person name="Choudhary V."/>
            <person name="Christoffels A."/>
            <person name="Clutterbuck D.R."/>
            <person name="Crowe M.L."/>
            <person name="Dalla E."/>
            <person name="Dalrymple B.P."/>
            <person name="de Bono B."/>
            <person name="Della Gatta G."/>
            <person name="di Bernardo D."/>
            <person name="Down T."/>
            <person name="Engstrom P."/>
            <person name="Fagiolini M."/>
            <person name="Faulkner G."/>
            <person name="Fletcher C.F."/>
            <person name="Fukushima T."/>
            <person name="Furuno M."/>
            <person name="Futaki S."/>
            <person name="Gariboldi M."/>
            <person name="Georgii-Hemming P."/>
            <person name="Gingeras T.R."/>
            <person name="Gojobori T."/>
            <person name="Green R.E."/>
            <person name="Gustincich S."/>
            <person name="Harbers M."/>
            <person name="Hayashi Y."/>
            <person name="Hensch T.K."/>
            <person name="Hirokawa N."/>
            <person name="Hill D."/>
            <person name="Huminiecki L."/>
            <person name="Iacono M."/>
            <person name="Ikeo K."/>
            <person name="Iwama A."/>
            <person name="Ishikawa T."/>
            <person name="Jakt M."/>
            <person name="Kanapin A."/>
            <person name="Katoh M."/>
            <person name="Kawasawa Y."/>
            <person name="Kelso J."/>
            <person name="Kitamura H."/>
            <person name="Kitano H."/>
            <person name="Kollias G."/>
            <person name="Krishnan S.P."/>
            <person name="Kruger A."/>
            <person name="Kummerfeld S.K."/>
            <person name="Kurochkin I.V."/>
            <person name="Lareau L.F."/>
            <person name="Lazarevic D."/>
            <person name="Lipovich L."/>
            <person name="Liu J."/>
            <person name="Liuni S."/>
            <person name="McWilliam S."/>
            <person name="Madan Babu M."/>
            <person name="Madera M."/>
            <person name="Marchionni L."/>
            <person name="Matsuda H."/>
            <person name="Matsuzawa S."/>
            <person name="Miki H."/>
            <person name="Mignone F."/>
            <person name="Miyake S."/>
            <person name="Morris K."/>
            <person name="Mottagui-Tabar S."/>
            <person name="Mulder N."/>
            <person name="Nakano N."/>
            <person name="Nakauchi H."/>
            <person name="Ng P."/>
            <person name="Nilsson R."/>
            <person name="Nishiguchi S."/>
            <person name="Nishikawa S."/>
            <person name="Nori F."/>
            <person name="Ohara O."/>
            <person name="Okazaki Y."/>
            <person name="Orlando V."/>
            <person name="Pang K.C."/>
            <person name="Pavan W.J."/>
            <person name="Pavesi G."/>
            <person name="Pesole G."/>
            <person name="Petrovsky N."/>
            <person name="Piazza S."/>
            <person name="Reed J."/>
            <person name="Reid J.F."/>
            <person name="Ring B.Z."/>
            <person name="Ringwald M."/>
            <person name="Rost B."/>
            <person name="Ruan Y."/>
            <person name="Salzberg S.L."/>
            <person name="Sandelin A."/>
            <person name="Schneider C."/>
            <person name="Schoenbach C."/>
            <person name="Sekiguchi K."/>
            <person name="Semple C.A."/>
            <person name="Seno S."/>
            <person name="Sessa L."/>
            <person name="Sheng Y."/>
            <person name="Shibata Y."/>
            <person name="Shimada H."/>
            <person name="Shimada K."/>
            <person name="Silva D."/>
            <person name="Sinclair B."/>
            <person name="Sperling S."/>
            <person name="Stupka E."/>
            <person name="Sugiura K."/>
            <person name="Sultana R."/>
            <person name="Takenaka Y."/>
            <person name="Taki K."/>
            <person name="Tammoja K."/>
            <person name="Tan S.L."/>
            <person name="Tang S."/>
            <person name="Taylor M.S."/>
            <person name="Tegner J."/>
            <person name="Teichmann S.A."/>
            <person name="Ueda H.R."/>
            <person name="van Nimwegen E."/>
            <person name="Verardo R."/>
            <person name="Wei C.L."/>
            <person name="Yagi K."/>
            <person name="Yamanishi H."/>
            <person name="Zabarovsky E."/>
            <person name="Zhu S."/>
            <person name="Zimmer A."/>
            <person name="Hide W."/>
            <person name="Bult C."/>
            <person name="Grimmond S.M."/>
            <person name="Teasdale R.D."/>
            <person name="Liu E.T."/>
            <person name="Brusic V."/>
            <person name="Quackenbush J."/>
            <person name="Wahlestedt C."/>
            <person name="Mattick J.S."/>
            <person name="Hume D.A."/>
            <person name="Kai C."/>
            <person name="Sasaki D."/>
            <person name="Tomaru Y."/>
            <person name="Fukuda S."/>
            <person name="Kanamori-Katayama M."/>
            <person name="Suzuki M."/>
            <person name="Aoki J."/>
            <person name="Arakawa T."/>
            <person name="Iida J."/>
            <person name="Imamura K."/>
            <person name="Itoh M."/>
            <person name="Kato T."/>
            <person name="Kawaji H."/>
            <person name="Kawagashira N."/>
            <person name="Kawashima T."/>
            <person name="Kojima M."/>
            <person name="Kondo S."/>
            <person name="Konno H."/>
            <person name="Nakano K."/>
            <person name="Ninomiya N."/>
            <person name="Nishio T."/>
            <person name="Okada M."/>
            <person name="Plessy C."/>
            <person name="Shibata K."/>
            <person name="Shiraki T."/>
            <person name="Suzuki S."/>
            <person name="Tagami M."/>
            <person name="Waki K."/>
            <person name="Watahiki A."/>
            <person name="Okamura-Oho Y."/>
            <person name="Suzuki H."/>
            <person name="Kawai J."/>
            <person name="Hayashizaki Y."/>
        </authorList>
    </citation>
    <scope>NUCLEOTIDE SEQUENCE [LARGE SCALE MRNA]</scope>
    <source>
        <strain>C57BL/6J</strain>
        <strain>NOD</strain>
        <tissue>Dendritic cell</tissue>
        <tissue>Diencephalon</tissue>
    </source>
</reference>
<reference key="2">
    <citation type="journal article" date="2009" name="PLoS Biol.">
        <title>Lineage-specific biology revealed by a finished genome assembly of the mouse.</title>
        <authorList>
            <person name="Church D.M."/>
            <person name="Goodstadt L."/>
            <person name="Hillier L.W."/>
            <person name="Zody M.C."/>
            <person name="Goldstein S."/>
            <person name="She X."/>
            <person name="Bult C.J."/>
            <person name="Agarwala R."/>
            <person name="Cherry J.L."/>
            <person name="DiCuccio M."/>
            <person name="Hlavina W."/>
            <person name="Kapustin Y."/>
            <person name="Meric P."/>
            <person name="Maglott D."/>
            <person name="Birtle Z."/>
            <person name="Marques A.C."/>
            <person name="Graves T."/>
            <person name="Zhou S."/>
            <person name="Teague B."/>
            <person name="Potamousis K."/>
            <person name="Churas C."/>
            <person name="Place M."/>
            <person name="Herschleb J."/>
            <person name="Runnheim R."/>
            <person name="Forrest D."/>
            <person name="Amos-Landgraf J."/>
            <person name="Schwartz D.C."/>
            <person name="Cheng Z."/>
            <person name="Lindblad-Toh K."/>
            <person name="Eichler E.E."/>
            <person name="Ponting C.P."/>
        </authorList>
    </citation>
    <scope>NUCLEOTIDE SEQUENCE [LARGE SCALE GENOMIC DNA]</scope>
    <source>
        <strain>C57BL/6J</strain>
    </source>
</reference>
<reference key="3">
    <citation type="submission" date="2005-07" db="EMBL/GenBank/DDBJ databases">
        <authorList>
            <person name="Mural R.J."/>
            <person name="Adams M.D."/>
            <person name="Myers E.W."/>
            <person name="Smith H.O."/>
            <person name="Venter J.C."/>
        </authorList>
    </citation>
    <scope>NUCLEOTIDE SEQUENCE [LARGE SCALE GENOMIC DNA]</scope>
</reference>
<reference key="4">
    <citation type="journal article" date="2004" name="Genome Res.">
        <title>The status, quality, and expansion of the NIH full-length cDNA project: the Mammalian Gene Collection (MGC).</title>
        <authorList>
            <consortium name="The MGC Project Team"/>
        </authorList>
    </citation>
    <scope>NUCLEOTIDE SEQUENCE [LARGE SCALE MRNA]</scope>
    <source>
        <strain>C57BL/6J</strain>
        <tissue>Embryonic brain</tissue>
    </source>
</reference>
<reference key="5">
    <citation type="journal article" date="2010" name="Cell">
        <title>A tissue-specific atlas of mouse protein phosphorylation and expression.</title>
        <authorList>
            <person name="Huttlin E.L."/>
            <person name="Jedrychowski M.P."/>
            <person name="Elias J.E."/>
            <person name="Goswami T."/>
            <person name="Rad R."/>
            <person name="Beausoleil S.A."/>
            <person name="Villen J."/>
            <person name="Haas W."/>
            <person name="Sowa M.E."/>
            <person name="Gygi S.P."/>
        </authorList>
    </citation>
    <scope>IDENTIFICATION BY MASS SPECTROMETRY [LARGE SCALE ANALYSIS]</scope>
    <source>
        <tissue>Brain</tissue>
        <tissue>Spleen</tissue>
    </source>
</reference>